<dbReference type="EC" id="6.1.1.3" evidence="1"/>
<dbReference type="EMBL" id="CP000867">
    <property type="protein sequence ID" value="ABX01313.1"/>
    <property type="molecule type" value="Genomic_DNA"/>
</dbReference>
<dbReference type="SMR" id="A9A6L7"/>
<dbReference type="STRING" id="444158.MmarC6_0495"/>
<dbReference type="KEGG" id="mmx:MmarC6_0495"/>
<dbReference type="eggNOG" id="arCOG00401">
    <property type="taxonomic scope" value="Archaea"/>
</dbReference>
<dbReference type="HOGENOM" id="CLU_029833_0_0_2"/>
<dbReference type="OrthoDB" id="372136at2157"/>
<dbReference type="PhylomeDB" id="A9A6L7"/>
<dbReference type="GO" id="GO:0005737">
    <property type="term" value="C:cytoplasm"/>
    <property type="evidence" value="ECO:0007669"/>
    <property type="project" value="UniProtKB-SubCell"/>
</dbReference>
<dbReference type="GO" id="GO:0005524">
    <property type="term" value="F:ATP binding"/>
    <property type="evidence" value="ECO:0007669"/>
    <property type="project" value="UniProtKB-UniRule"/>
</dbReference>
<dbReference type="GO" id="GO:0004829">
    <property type="term" value="F:threonine-tRNA ligase activity"/>
    <property type="evidence" value="ECO:0007669"/>
    <property type="project" value="UniProtKB-UniRule"/>
</dbReference>
<dbReference type="GO" id="GO:0000049">
    <property type="term" value="F:tRNA binding"/>
    <property type="evidence" value="ECO:0007669"/>
    <property type="project" value="UniProtKB-KW"/>
</dbReference>
<dbReference type="GO" id="GO:0008270">
    <property type="term" value="F:zinc ion binding"/>
    <property type="evidence" value="ECO:0007669"/>
    <property type="project" value="InterPro"/>
</dbReference>
<dbReference type="GO" id="GO:0006435">
    <property type="term" value="P:threonyl-tRNA aminoacylation"/>
    <property type="evidence" value="ECO:0007669"/>
    <property type="project" value="UniProtKB-UniRule"/>
</dbReference>
<dbReference type="CDD" id="cd00860">
    <property type="entry name" value="ThrRS_anticodon"/>
    <property type="match status" value="1"/>
</dbReference>
<dbReference type="FunFam" id="3.40.50.800:FF:000001">
    <property type="entry name" value="Threonine--tRNA ligase"/>
    <property type="match status" value="1"/>
</dbReference>
<dbReference type="FunFam" id="3.50.80.10:FF:000004">
    <property type="entry name" value="Threonine--tRNA ligase"/>
    <property type="match status" value="1"/>
</dbReference>
<dbReference type="Gene3D" id="3.40.50.800">
    <property type="entry name" value="Anticodon-binding domain"/>
    <property type="match status" value="1"/>
</dbReference>
<dbReference type="Gene3D" id="3.30.930.10">
    <property type="entry name" value="Bira Bifunctional Protein, Domain 2"/>
    <property type="match status" value="1"/>
</dbReference>
<dbReference type="Gene3D" id="3.50.80.10">
    <property type="entry name" value="D-tyrosyl-tRNA(Tyr) deacylase"/>
    <property type="match status" value="1"/>
</dbReference>
<dbReference type="HAMAP" id="MF_00184">
    <property type="entry name" value="Thr_tRNA_synth"/>
    <property type="match status" value="1"/>
</dbReference>
<dbReference type="InterPro" id="IPR002314">
    <property type="entry name" value="aa-tRNA-synt_IIb"/>
</dbReference>
<dbReference type="InterPro" id="IPR006195">
    <property type="entry name" value="aa-tRNA-synth_II"/>
</dbReference>
<dbReference type="InterPro" id="IPR045864">
    <property type="entry name" value="aa-tRNA-synth_II/BPL/LPL"/>
</dbReference>
<dbReference type="InterPro" id="IPR004154">
    <property type="entry name" value="Anticodon-bd"/>
</dbReference>
<dbReference type="InterPro" id="IPR036621">
    <property type="entry name" value="Anticodon-bd_dom_sf"/>
</dbReference>
<dbReference type="InterPro" id="IPR023509">
    <property type="entry name" value="DTD-like_sf"/>
</dbReference>
<dbReference type="InterPro" id="IPR002320">
    <property type="entry name" value="Thr-tRNA-ligase_IIa"/>
</dbReference>
<dbReference type="InterPro" id="IPR015011">
    <property type="entry name" value="Threonyl-tRNA_syn_edit_dom_arc"/>
</dbReference>
<dbReference type="InterPro" id="IPR047246">
    <property type="entry name" value="ThrRS_anticodon"/>
</dbReference>
<dbReference type="NCBIfam" id="NF003068">
    <property type="entry name" value="PRK03991.1"/>
    <property type="match status" value="1"/>
</dbReference>
<dbReference type="NCBIfam" id="TIGR00418">
    <property type="entry name" value="thrS"/>
    <property type="match status" value="1"/>
</dbReference>
<dbReference type="PANTHER" id="PTHR11451:SF44">
    <property type="entry name" value="THREONINE--TRNA LIGASE, CHLOROPLASTIC_MITOCHONDRIAL 2"/>
    <property type="match status" value="1"/>
</dbReference>
<dbReference type="PANTHER" id="PTHR11451">
    <property type="entry name" value="THREONINE-TRNA LIGASE"/>
    <property type="match status" value="1"/>
</dbReference>
<dbReference type="Pfam" id="PF03129">
    <property type="entry name" value="HGTP_anticodon"/>
    <property type="match status" value="1"/>
</dbReference>
<dbReference type="Pfam" id="PF00587">
    <property type="entry name" value="tRNA-synt_2b"/>
    <property type="match status" value="1"/>
</dbReference>
<dbReference type="Pfam" id="PF08915">
    <property type="entry name" value="tRNA-Thr_ED"/>
    <property type="match status" value="1"/>
</dbReference>
<dbReference type="PRINTS" id="PR01047">
    <property type="entry name" value="TRNASYNTHTHR"/>
</dbReference>
<dbReference type="SUPFAM" id="SSF52954">
    <property type="entry name" value="Class II aaRS ABD-related"/>
    <property type="match status" value="1"/>
</dbReference>
<dbReference type="SUPFAM" id="SSF55681">
    <property type="entry name" value="Class II aaRS and biotin synthetases"/>
    <property type="match status" value="1"/>
</dbReference>
<dbReference type="PROSITE" id="PS50862">
    <property type="entry name" value="AA_TRNA_LIGASE_II"/>
    <property type="match status" value="1"/>
</dbReference>
<evidence type="ECO:0000255" key="1">
    <source>
        <dbReference type="HAMAP-Rule" id="MF_00184"/>
    </source>
</evidence>
<organism>
    <name type="scientific">Methanococcus maripaludis (strain C6 / ATCC BAA-1332)</name>
    <dbReference type="NCBI Taxonomy" id="444158"/>
    <lineage>
        <taxon>Archaea</taxon>
        <taxon>Methanobacteriati</taxon>
        <taxon>Methanobacteriota</taxon>
        <taxon>Methanomada group</taxon>
        <taxon>Methanococci</taxon>
        <taxon>Methanococcales</taxon>
        <taxon>Methanococcaceae</taxon>
        <taxon>Methanococcus</taxon>
    </lineage>
</organism>
<name>SYT_METM6</name>
<proteinExistence type="inferred from homology"/>
<reference key="1">
    <citation type="submission" date="2007-10" db="EMBL/GenBank/DDBJ databases">
        <title>Complete sequence of Methanococcus maripaludis C6.</title>
        <authorList>
            <consortium name="US DOE Joint Genome Institute"/>
            <person name="Copeland A."/>
            <person name="Lucas S."/>
            <person name="Lapidus A."/>
            <person name="Barry K."/>
            <person name="Glavina del Rio T."/>
            <person name="Dalin E."/>
            <person name="Tice H."/>
            <person name="Pitluck S."/>
            <person name="Clum A."/>
            <person name="Schmutz J."/>
            <person name="Larimer F."/>
            <person name="Land M."/>
            <person name="Hauser L."/>
            <person name="Kyrpides N."/>
            <person name="Mikhailova N."/>
            <person name="Sieprawska-Lupa M."/>
            <person name="Whitman W.B."/>
            <person name="Richardson P."/>
        </authorList>
    </citation>
    <scope>NUCLEOTIDE SEQUENCE [LARGE SCALE GENOMIC DNA]</scope>
    <source>
        <strain>C6 / ATCC BAA-1332</strain>
    </source>
</reference>
<accession>A9A6L7</accession>
<feature type="chain" id="PRO_1000098585" description="Threonine--tRNA ligase">
    <location>
        <begin position="1"/>
        <end position="622"/>
    </location>
</feature>
<feature type="region of interest" description="Editing domain" evidence="1">
    <location>
        <begin position="1"/>
        <end position="141"/>
    </location>
</feature>
<feature type="region of interest" description="Catalytic" evidence="1">
    <location>
        <begin position="199"/>
        <end position="498"/>
    </location>
</feature>
<feature type="binding site" evidence="1">
    <location>
        <position position="291"/>
    </location>
    <ligand>
        <name>Zn(2+)</name>
        <dbReference type="ChEBI" id="CHEBI:29105"/>
    </ligand>
</feature>
<feature type="binding site" evidence="1">
    <location>
        <position position="343"/>
    </location>
    <ligand>
        <name>Zn(2+)</name>
        <dbReference type="ChEBI" id="CHEBI:29105"/>
    </ligand>
</feature>
<feature type="binding site" evidence="1">
    <location>
        <position position="467"/>
    </location>
    <ligand>
        <name>Zn(2+)</name>
        <dbReference type="ChEBI" id="CHEBI:29105"/>
    </ligand>
</feature>
<sequence>MKTLLIHSDYLEFEAKEKTKIAEDADVLSGKMDECLTVFIAVEKDDESDPDAVVKNAVEEIVKTADNLKVKNVVVYPYAHLSSDLGSPATAKEILAEIEKELSGNYEVLRAPFGWYKAFKISCKGHPLSELSRKITTERKEEVKKEKVVSKFYIINGENLELTEVNDEVISKMEDKGLLALLKHELDIKEEGKENGEPPHVKYIKEKEICDYEPSSDAGHFRWYPKGKLIRDLLSDYVYNLVVERGGMPVETPVMYDLQNNAIREHADKFGERQYRFKQGNKDLMLRFAACFGQFMMKKDMYLLPKHMPLKLYELSTYSFRYEQRGELVGLKRLRAFTMPDMHTVCIDMKQAMEAFEDQLWMGLKTGDDFKTPYAIIFRFTEDFFEENKEWFFGMAKEYKQKYGKDAILEILPGRKHYWVGKVDMAVVDSFGRPIENPTVQIDVESAERFGIVVHDGDKKVHPIILHCSPTGSVERVLCGLLENAYLNTLENRPPALPTWLTPVQARVIPVGDKHSAFALDVATKLRASGIRADFDDREDSMGKKVRNAGTDWVNYVVVIGDSEMESGKLTVTVREESELKKAKKEELTVEELIEKITSDVKDAPKRPLPLPMKCSVQPIFR</sequence>
<protein>
    <recommendedName>
        <fullName evidence="1">Threonine--tRNA ligase</fullName>
        <ecNumber evidence="1">6.1.1.3</ecNumber>
    </recommendedName>
    <alternativeName>
        <fullName evidence="1">Threonyl-tRNA synthetase</fullName>
        <shortName evidence="1">ThrRS</shortName>
    </alternativeName>
</protein>
<gene>
    <name evidence="1" type="primary">thrS</name>
    <name type="ordered locus">MmarC6_0495</name>
</gene>
<keyword id="KW-0030">Aminoacyl-tRNA synthetase</keyword>
<keyword id="KW-0067">ATP-binding</keyword>
<keyword id="KW-0963">Cytoplasm</keyword>
<keyword id="KW-0436">Ligase</keyword>
<keyword id="KW-0479">Metal-binding</keyword>
<keyword id="KW-0547">Nucleotide-binding</keyword>
<keyword id="KW-0648">Protein biosynthesis</keyword>
<keyword id="KW-0694">RNA-binding</keyword>
<keyword id="KW-0820">tRNA-binding</keyword>
<keyword id="KW-0862">Zinc</keyword>
<comment type="function">
    <text evidence="1">Catalyzes the attachment of threonine to tRNA(Thr) in a two-step reaction: L-threonine is first activated by ATP to form Thr-AMP and then transferred to the acceptor end of tRNA(Thr). Also edits incorrectly charged L-seryl-tRNA(Thr).</text>
</comment>
<comment type="catalytic activity">
    <reaction evidence="1">
        <text>tRNA(Thr) + L-threonine + ATP = L-threonyl-tRNA(Thr) + AMP + diphosphate + H(+)</text>
        <dbReference type="Rhea" id="RHEA:24624"/>
        <dbReference type="Rhea" id="RHEA-COMP:9670"/>
        <dbReference type="Rhea" id="RHEA-COMP:9704"/>
        <dbReference type="ChEBI" id="CHEBI:15378"/>
        <dbReference type="ChEBI" id="CHEBI:30616"/>
        <dbReference type="ChEBI" id="CHEBI:33019"/>
        <dbReference type="ChEBI" id="CHEBI:57926"/>
        <dbReference type="ChEBI" id="CHEBI:78442"/>
        <dbReference type="ChEBI" id="CHEBI:78534"/>
        <dbReference type="ChEBI" id="CHEBI:456215"/>
        <dbReference type="EC" id="6.1.1.3"/>
    </reaction>
</comment>
<comment type="cofactor">
    <cofactor evidence="1">
        <name>Zn(2+)</name>
        <dbReference type="ChEBI" id="CHEBI:29105"/>
    </cofactor>
    <text evidence="1">Binds 1 zinc ion per subunit.</text>
</comment>
<comment type="subunit">
    <text evidence="1">Homodimer.</text>
</comment>
<comment type="subcellular location">
    <subcellularLocation>
        <location evidence="1">Cytoplasm</location>
    </subcellularLocation>
</comment>
<comment type="domain">
    <text evidence="1">The N-terminal domain is an archaea-specific tRNA-editing domain that hydrolyzes incorrectly charged L-seryl-tRNA(Thr). Catalysis of tRNA editing is performed by the charged tRNA itself.</text>
</comment>
<comment type="similarity">
    <text evidence="1">Belongs to the class-II aminoacyl-tRNA synthetase family.</text>
</comment>